<proteinExistence type="inferred from homology"/>
<evidence type="ECO:0000255" key="1">
    <source>
        <dbReference type="HAMAP-Rule" id="MF_01804"/>
    </source>
</evidence>
<organism>
    <name type="scientific">Staphylococcus aureus (strain COL)</name>
    <dbReference type="NCBI Taxonomy" id="93062"/>
    <lineage>
        <taxon>Bacteria</taxon>
        <taxon>Bacillati</taxon>
        <taxon>Bacillota</taxon>
        <taxon>Bacilli</taxon>
        <taxon>Bacillales</taxon>
        <taxon>Staphylococcaceae</taxon>
        <taxon>Staphylococcus</taxon>
    </lineage>
</organism>
<gene>
    <name evidence="1" type="primary">scpB</name>
    <name type="ordered locus">SACOL1537</name>
</gene>
<accession>Q5HFS8</accession>
<name>SCPB_STAAC</name>
<reference key="1">
    <citation type="journal article" date="2005" name="J. Bacteriol.">
        <title>Insights on evolution of virulence and resistance from the complete genome analysis of an early methicillin-resistant Staphylococcus aureus strain and a biofilm-producing methicillin-resistant Staphylococcus epidermidis strain.</title>
        <authorList>
            <person name="Gill S.R."/>
            <person name="Fouts D.E."/>
            <person name="Archer G.L."/>
            <person name="Mongodin E.F."/>
            <person name="DeBoy R.T."/>
            <person name="Ravel J."/>
            <person name="Paulsen I.T."/>
            <person name="Kolonay J.F."/>
            <person name="Brinkac L.M."/>
            <person name="Beanan M.J."/>
            <person name="Dodson R.J."/>
            <person name="Daugherty S.C."/>
            <person name="Madupu R."/>
            <person name="Angiuoli S.V."/>
            <person name="Durkin A.S."/>
            <person name="Haft D.H."/>
            <person name="Vamathevan J.J."/>
            <person name="Khouri H."/>
            <person name="Utterback T.R."/>
            <person name="Lee C."/>
            <person name="Dimitrov G."/>
            <person name="Jiang L."/>
            <person name="Qin H."/>
            <person name="Weidman J."/>
            <person name="Tran K."/>
            <person name="Kang K.H."/>
            <person name="Hance I.R."/>
            <person name="Nelson K.E."/>
            <person name="Fraser C.M."/>
        </authorList>
    </citation>
    <scope>NUCLEOTIDE SEQUENCE [LARGE SCALE GENOMIC DNA]</scope>
    <source>
        <strain>COL</strain>
    </source>
</reference>
<comment type="function">
    <text evidence="1">Participates in chromosomal partition during cell division. May act via the formation of a condensin-like complex containing Smc and ScpA that pull DNA away from mid-cell into both cell halves.</text>
</comment>
<comment type="subunit">
    <text evidence="1">Homodimer. Homodimerization may be required to stabilize the binding of ScpA to the Smc head domains. Component of a cohesin-like complex composed of ScpA, ScpB and the Smc homodimer, in which ScpA and ScpB bind to the head domain of Smc. The presence of the three proteins is required for the association of the complex with DNA.</text>
</comment>
<comment type="subcellular location">
    <subcellularLocation>
        <location evidence="1">Cytoplasm</location>
    </subcellularLocation>
    <text evidence="1">Associated with two foci at the outer edges of the nucleoid region in young cells, and at four foci within both cell halves in older cells.</text>
</comment>
<comment type="similarity">
    <text evidence="1">Belongs to the ScpB family.</text>
</comment>
<protein>
    <recommendedName>
        <fullName evidence="1">Segregation and condensation protein B</fullName>
    </recommendedName>
</protein>
<feature type="chain" id="PRO_0000211145" description="Segregation and condensation protein B">
    <location>
        <begin position="1"/>
        <end position="180"/>
    </location>
</feature>
<dbReference type="EMBL" id="CP000046">
    <property type="protein sequence ID" value="AAW36730.1"/>
    <property type="molecule type" value="Genomic_DNA"/>
</dbReference>
<dbReference type="RefSeq" id="WP_000368653.1">
    <property type="nucleotide sequence ID" value="NZ_JBGOFO010000003.1"/>
</dbReference>
<dbReference type="SMR" id="Q5HFS8"/>
<dbReference type="KEGG" id="sac:SACOL1537"/>
<dbReference type="HOGENOM" id="CLU_045647_5_3_9"/>
<dbReference type="Proteomes" id="UP000000530">
    <property type="component" value="Chromosome"/>
</dbReference>
<dbReference type="GO" id="GO:0005737">
    <property type="term" value="C:cytoplasm"/>
    <property type="evidence" value="ECO:0007669"/>
    <property type="project" value="UniProtKB-SubCell"/>
</dbReference>
<dbReference type="GO" id="GO:0051301">
    <property type="term" value="P:cell division"/>
    <property type="evidence" value="ECO:0007669"/>
    <property type="project" value="UniProtKB-KW"/>
</dbReference>
<dbReference type="GO" id="GO:0051304">
    <property type="term" value="P:chromosome separation"/>
    <property type="evidence" value="ECO:0007669"/>
    <property type="project" value="InterPro"/>
</dbReference>
<dbReference type="GO" id="GO:0006260">
    <property type="term" value="P:DNA replication"/>
    <property type="evidence" value="ECO:0007669"/>
    <property type="project" value="UniProtKB-UniRule"/>
</dbReference>
<dbReference type="Gene3D" id="1.10.10.10">
    <property type="entry name" value="Winged helix-like DNA-binding domain superfamily/Winged helix DNA-binding domain"/>
    <property type="match status" value="2"/>
</dbReference>
<dbReference type="HAMAP" id="MF_01804">
    <property type="entry name" value="ScpB"/>
    <property type="match status" value="1"/>
</dbReference>
<dbReference type="InterPro" id="IPR005234">
    <property type="entry name" value="ScpB_csome_segregation"/>
</dbReference>
<dbReference type="InterPro" id="IPR036388">
    <property type="entry name" value="WH-like_DNA-bd_sf"/>
</dbReference>
<dbReference type="InterPro" id="IPR036390">
    <property type="entry name" value="WH_DNA-bd_sf"/>
</dbReference>
<dbReference type="NCBIfam" id="TIGR00281">
    <property type="entry name" value="SMC-Scp complex subunit ScpB"/>
    <property type="match status" value="1"/>
</dbReference>
<dbReference type="PANTHER" id="PTHR34298">
    <property type="entry name" value="SEGREGATION AND CONDENSATION PROTEIN B"/>
    <property type="match status" value="1"/>
</dbReference>
<dbReference type="PANTHER" id="PTHR34298:SF2">
    <property type="entry name" value="SEGREGATION AND CONDENSATION PROTEIN B"/>
    <property type="match status" value="1"/>
</dbReference>
<dbReference type="Pfam" id="PF04079">
    <property type="entry name" value="SMC_ScpB"/>
    <property type="match status" value="1"/>
</dbReference>
<dbReference type="PIRSF" id="PIRSF019345">
    <property type="entry name" value="ScpB"/>
    <property type="match status" value="1"/>
</dbReference>
<dbReference type="SUPFAM" id="SSF46785">
    <property type="entry name" value="Winged helix' DNA-binding domain"/>
    <property type="match status" value="2"/>
</dbReference>
<keyword id="KW-0131">Cell cycle</keyword>
<keyword id="KW-0132">Cell division</keyword>
<keyword id="KW-0159">Chromosome partition</keyword>
<keyword id="KW-0963">Cytoplasm</keyword>
<sequence>MDNHGILESLLFTAGDEGLDEKQLLEILDMSKDQLVELIENYSSHGLMIQRFGMTYVLTTKKEAATYIEQLIEQKSQMKLSQAAMEVLSIIAYNQPLSRSDIELIRSINSDGAVKTLIAKGLVEAKVVNEQRSQQLITTDLFLNVFGISNIEDLPTTEEDDEEMDAFFSNLVNQKGENND</sequence>